<reference key="1">
    <citation type="journal article" date="2007" name="Science">
        <title>Legumes symbioses: absence of nod genes in photosynthetic bradyrhizobia.</title>
        <authorList>
            <person name="Giraud E."/>
            <person name="Moulin L."/>
            <person name="Vallenet D."/>
            <person name="Barbe V."/>
            <person name="Cytryn E."/>
            <person name="Avarre J.-C."/>
            <person name="Jaubert M."/>
            <person name="Simon D."/>
            <person name="Cartieaux F."/>
            <person name="Prin Y."/>
            <person name="Bena G."/>
            <person name="Hannibal L."/>
            <person name="Fardoux J."/>
            <person name="Kojadinovic M."/>
            <person name="Vuillet L."/>
            <person name="Lajus A."/>
            <person name="Cruveiller S."/>
            <person name="Rouy Z."/>
            <person name="Mangenot S."/>
            <person name="Segurens B."/>
            <person name="Dossat C."/>
            <person name="Franck W.L."/>
            <person name="Chang W.-S."/>
            <person name="Saunders E."/>
            <person name="Bruce D."/>
            <person name="Richardson P."/>
            <person name="Normand P."/>
            <person name="Dreyfus B."/>
            <person name="Pignol D."/>
            <person name="Stacey G."/>
            <person name="Emerich D."/>
            <person name="Vermeglio A."/>
            <person name="Medigue C."/>
            <person name="Sadowsky M."/>
        </authorList>
    </citation>
    <scope>NUCLEOTIDE SEQUENCE [LARGE SCALE GENOMIC DNA]</scope>
    <source>
        <strain>ORS 278</strain>
    </source>
</reference>
<sequence length="399" mass="43682">MMRASYLFTSESVSEGHPDKVCDRISDEIVDLFYREGPKAGIDPWQIRAACETLATTNKVVIAGETRGPSSVTNEHIEHVVREAIKDIGYEQEGFHWKTCDIEILLHPQSADIAQGVDALQPGEVKEEGAGDQGIMFGYACNETPDLMPAPIFYAHKILRMIAEARHSGVEKVLGPDSKSQVTVRYENGKPVGVREIVVSHQHLIPDMTSAQVRERVEPYVREALPKDWITKDTIWHINPTGKFYIGGPDGDTGLTGRKIIVDTYGGAAPHGGGAFSGKDPTKVDRSAAYAARYLAKNIVAAGLADRCTLQLAYAIGVARPLSIYIDTHGTGKVSEDKLEKAAAEVMNLTPRGIRSHLDLNRPIYARTAAYGHFGRTPDNEGGFSWEKTDLAEAFKRAV</sequence>
<evidence type="ECO:0000255" key="1">
    <source>
        <dbReference type="HAMAP-Rule" id="MF_00086"/>
    </source>
</evidence>
<protein>
    <recommendedName>
        <fullName evidence="1">S-adenosylmethionine synthase</fullName>
        <shortName evidence="1">AdoMet synthase</shortName>
        <ecNumber evidence="1">2.5.1.6</ecNumber>
    </recommendedName>
    <alternativeName>
        <fullName evidence="1">MAT</fullName>
    </alternativeName>
    <alternativeName>
        <fullName evidence="1">Methionine adenosyltransferase</fullName>
    </alternativeName>
</protein>
<keyword id="KW-0067">ATP-binding</keyword>
<keyword id="KW-0963">Cytoplasm</keyword>
<keyword id="KW-0460">Magnesium</keyword>
<keyword id="KW-0479">Metal-binding</keyword>
<keyword id="KW-0547">Nucleotide-binding</keyword>
<keyword id="KW-0554">One-carbon metabolism</keyword>
<keyword id="KW-0630">Potassium</keyword>
<keyword id="KW-1185">Reference proteome</keyword>
<keyword id="KW-0808">Transferase</keyword>
<organism>
    <name type="scientific">Bradyrhizobium sp. (strain ORS 278)</name>
    <dbReference type="NCBI Taxonomy" id="114615"/>
    <lineage>
        <taxon>Bacteria</taxon>
        <taxon>Pseudomonadati</taxon>
        <taxon>Pseudomonadota</taxon>
        <taxon>Alphaproteobacteria</taxon>
        <taxon>Hyphomicrobiales</taxon>
        <taxon>Nitrobacteraceae</taxon>
        <taxon>Bradyrhizobium</taxon>
    </lineage>
</organism>
<comment type="function">
    <text evidence="1">Catalyzes the formation of S-adenosylmethionine (AdoMet) from methionine and ATP. The overall synthetic reaction is composed of two sequential steps, AdoMet formation and the subsequent tripolyphosphate hydrolysis which occurs prior to release of AdoMet from the enzyme.</text>
</comment>
<comment type="catalytic activity">
    <reaction evidence="1">
        <text>L-methionine + ATP + H2O = S-adenosyl-L-methionine + phosphate + diphosphate</text>
        <dbReference type="Rhea" id="RHEA:21080"/>
        <dbReference type="ChEBI" id="CHEBI:15377"/>
        <dbReference type="ChEBI" id="CHEBI:30616"/>
        <dbReference type="ChEBI" id="CHEBI:33019"/>
        <dbReference type="ChEBI" id="CHEBI:43474"/>
        <dbReference type="ChEBI" id="CHEBI:57844"/>
        <dbReference type="ChEBI" id="CHEBI:59789"/>
        <dbReference type="EC" id="2.5.1.6"/>
    </reaction>
</comment>
<comment type="cofactor">
    <cofactor evidence="1">
        <name>Mg(2+)</name>
        <dbReference type="ChEBI" id="CHEBI:18420"/>
    </cofactor>
    <text evidence="1">Binds 2 divalent ions per subunit.</text>
</comment>
<comment type="cofactor">
    <cofactor evidence="1">
        <name>K(+)</name>
        <dbReference type="ChEBI" id="CHEBI:29103"/>
    </cofactor>
    <text evidence="1">Binds 1 potassium ion per subunit.</text>
</comment>
<comment type="pathway">
    <text evidence="1">Amino-acid biosynthesis; S-adenosyl-L-methionine biosynthesis; S-adenosyl-L-methionine from L-methionine: step 1/1.</text>
</comment>
<comment type="subunit">
    <text evidence="1">Homotetramer; dimer of dimers.</text>
</comment>
<comment type="subcellular location">
    <subcellularLocation>
        <location evidence="1">Cytoplasm</location>
    </subcellularLocation>
</comment>
<comment type="similarity">
    <text evidence="1">Belongs to the AdoMet synthase family.</text>
</comment>
<proteinExistence type="inferred from homology"/>
<feature type="chain" id="PRO_1000007926" description="S-adenosylmethionine synthase">
    <location>
        <begin position="1"/>
        <end position="399"/>
    </location>
</feature>
<feature type="region of interest" description="Flexible loop" evidence="1">
    <location>
        <begin position="109"/>
        <end position="119"/>
    </location>
</feature>
<feature type="binding site" description="in other chain" evidence="1">
    <location>
        <position position="17"/>
    </location>
    <ligand>
        <name>ATP</name>
        <dbReference type="ChEBI" id="CHEBI:30616"/>
        <note>ligand shared between two neighboring subunits</note>
    </ligand>
</feature>
<feature type="binding site" evidence="1">
    <location>
        <position position="19"/>
    </location>
    <ligand>
        <name>Mg(2+)</name>
        <dbReference type="ChEBI" id="CHEBI:18420"/>
    </ligand>
</feature>
<feature type="binding site" evidence="1">
    <location>
        <position position="52"/>
    </location>
    <ligand>
        <name>K(+)</name>
        <dbReference type="ChEBI" id="CHEBI:29103"/>
    </ligand>
</feature>
<feature type="binding site" description="in other chain" evidence="1">
    <location>
        <position position="65"/>
    </location>
    <ligand>
        <name>L-methionine</name>
        <dbReference type="ChEBI" id="CHEBI:57844"/>
        <note>ligand shared between two neighboring subunits</note>
    </ligand>
</feature>
<feature type="binding site" description="in other chain" evidence="1">
    <location>
        <position position="109"/>
    </location>
    <ligand>
        <name>L-methionine</name>
        <dbReference type="ChEBI" id="CHEBI:57844"/>
        <note>ligand shared between two neighboring subunits</note>
    </ligand>
</feature>
<feature type="binding site" description="in other chain" evidence="1">
    <location>
        <begin position="177"/>
        <end position="179"/>
    </location>
    <ligand>
        <name>ATP</name>
        <dbReference type="ChEBI" id="CHEBI:30616"/>
        <note>ligand shared between two neighboring subunits</note>
    </ligand>
</feature>
<feature type="binding site" description="in other chain" evidence="1">
    <location>
        <begin position="243"/>
        <end position="244"/>
    </location>
    <ligand>
        <name>ATP</name>
        <dbReference type="ChEBI" id="CHEBI:30616"/>
        <note>ligand shared between two neighboring subunits</note>
    </ligand>
</feature>
<feature type="binding site" evidence="1">
    <location>
        <position position="252"/>
    </location>
    <ligand>
        <name>ATP</name>
        <dbReference type="ChEBI" id="CHEBI:30616"/>
        <note>ligand shared between two neighboring subunits</note>
    </ligand>
</feature>
<feature type="binding site" evidence="1">
    <location>
        <position position="252"/>
    </location>
    <ligand>
        <name>L-methionine</name>
        <dbReference type="ChEBI" id="CHEBI:57844"/>
        <note>ligand shared between two neighboring subunits</note>
    </ligand>
</feature>
<feature type="binding site" description="in other chain" evidence="1">
    <location>
        <begin position="258"/>
        <end position="259"/>
    </location>
    <ligand>
        <name>ATP</name>
        <dbReference type="ChEBI" id="CHEBI:30616"/>
        <note>ligand shared between two neighboring subunits</note>
    </ligand>
</feature>
<feature type="binding site" evidence="1">
    <location>
        <position position="275"/>
    </location>
    <ligand>
        <name>ATP</name>
        <dbReference type="ChEBI" id="CHEBI:30616"/>
        <note>ligand shared between two neighboring subunits</note>
    </ligand>
</feature>
<feature type="binding site" evidence="1">
    <location>
        <position position="279"/>
    </location>
    <ligand>
        <name>ATP</name>
        <dbReference type="ChEBI" id="CHEBI:30616"/>
        <note>ligand shared between two neighboring subunits</note>
    </ligand>
</feature>
<feature type="binding site" description="in other chain" evidence="1">
    <location>
        <position position="283"/>
    </location>
    <ligand>
        <name>L-methionine</name>
        <dbReference type="ChEBI" id="CHEBI:57844"/>
        <note>ligand shared between two neighboring subunits</note>
    </ligand>
</feature>
<accession>A4YYF1</accession>
<gene>
    <name evidence="1" type="primary">metK</name>
    <name type="ordered locus">BRADO5239</name>
</gene>
<dbReference type="EC" id="2.5.1.6" evidence="1"/>
<dbReference type="EMBL" id="CU234118">
    <property type="protein sequence ID" value="CAL78927.1"/>
    <property type="molecule type" value="Genomic_DNA"/>
</dbReference>
<dbReference type="SMR" id="A4YYF1"/>
<dbReference type="STRING" id="114615.BRADO5239"/>
<dbReference type="KEGG" id="bra:BRADO5239"/>
<dbReference type="eggNOG" id="COG0192">
    <property type="taxonomic scope" value="Bacteria"/>
</dbReference>
<dbReference type="HOGENOM" id="CLU_041802_1_1_5"/>
<dbReference type="UniPathway" id="UPA00315">
    <property type="reaction ID" value="UER00080"/>
</dbReference>
<dbReference type="Proteomes" id="UP000001994">
    <property type="component" value="Chromosome"/>
</dbReference>
<dbReference type="GO" id="GO:0005737">
    <property type="term" value="C:cytoplasm"/>
    <property type="evidence" value="ECO:0007669"/>
    <property type="project" value="UniProtKB-SubCell"/>
</dbReference>
<dbReference type="GO" id="GO:0005524">
    <property type="term" value="F:ATP binding"/>
    <property type="evidence" value="ECO:0007669"/>
    <property type="project" value="UniProtKB-UniRule"/>
</dbReference>
<dbReference type="GO" id="GO:0000287">
    <property type="term" value="F:magnesium ion binding"/>
    <property type="evidence" value="ECO:0007669"/>
    <property type="project" value="UniProtKB-UniRule"/>
</dbReference>
<dbReference type="GO" id="GO:0004478">
    <property type="term" value="F:methionine adenosyltransferase activity"/>
    <property type="evidence" value="ECO:0007669"/>
    <property type="project" value="UniProtKB-UniRule"/>
</dbReference>
<dbReference type="GO" id="GO:0006730">
    <property type="term" value="P:one-carbon metabolic process"/>
    <property type="evidence" value="ECO:0007669"/>
    <property type="project" value="UniProtKB-KW"/>
</dbReference>
<dbReference type="GO" id="GO:0006556">
    <property type="term" value="P:S-adenosylmethionine biosynthetic process"/>
    <property type="evidence" value="ECO:0007669"/>
    <property type="project" value="UniProtKB-UniRule"/>
</dbReference>
<dbReference type="CDD" id="cd18079">
    <property type="entry name" value="S-AdoMet_synt"/>
    <property type="match status" value="1"/>
</dbReference>
<dbReference type="FunFam" id="3.30.300.10:FF:000003">
    <property type="entry name" value="S-adenosylmethionine synthase"/>
    <property type="match status" value="1"/>
</dbReference>
<dbReference type="Gene3D" id="3.30.300.10">
    <property type="match status" value="3"/>
</dbReference>
<dbReference type="HAMAP" id="MF_00086">
    <property type="entry name" value="S_AdoMet_synth1"/>
    <property type="match status" value="1"/>
</dbReference>
<dbReference type="InterPro" id="IPR022631">
    <property type="entry name" value="ADOMET_SYNTHASE_CS"/>
</dbReference>
<dbReference type="InterPro" id="IPR022630">
    <property type="entry name" value="S-AdoMet_synt_C"/>
</dbReference>
<dbReference type="InterPro" id="IPR022629">
    <property type="entry name" value="S-AdoMet_synt_central"/>
</dbReference>
<dbReference type="InterPro" id="IPR022628">
    <property type="entry name" value="S-AdoMet_synt_N"/>
</dbReference>
<dbReference type="InterPro" id="IPR002133">
    <property type="entry name" value="S-AdoMet_synthetase"/>
</dbReference>
<dbReference type="InterPro" id="IPR022636">
    <property type="entry name" value="S-AdoMet_synthetase_sfam"/>
</dbReference>
<dbReference type="NCBIfam" id="TIGR01034">
    <property type="entry name" value="metK"/>
    <property type="match status" value="1"/>
</dbReference>
<dbReference type="PANTHER" id="PTHR11964">
    <property type="entry name" value="S-ADENOSYLMETHIONINE SYNTHETASE"/>
    <property type="match status" value="1"/>
</dbReference>
<dbReference type="Pfam" id="PF02773">
    <property type="entry name" value="S-AdoMet_synt_C"/>
    <property type="match status" value="1"/>
</dbReference>
<dbReference type="Pfam" id="PF02772">
    <property type="entry name" value="S-AdoMet_synt_M"/>
    <property type="match status" value="1"/>
</dbReference>
<dbReference type="Pfam" id="PF00438">
    <property type="entry name" value="S-AdoMet_synt_N"/>
    <property type="match status" value="1"/>
</dbReference>
<dbReference type="PIRSF" id="PIRSF000497">
    <property type="entry name" value="MAT"/>
    <property type="match status" value="1"/>
</dbReference>
<dbReference type="SUPFAM" id="SSF55973">
    <property type="entry name" value="S-adenosylmethionine synthetase"/>
    <property type="match status" value="3"/>
</dbReference>
<dbReference type="PROSITE" id="PS00376">
    <property type="entry name" value="ADOMET_SYNTHASE_1"/>
    <property type="match status" value="1"/>
</dbReference>
<dbReference type="PROSITE" id="PS00377">
    <property type="entry name" value="ADOMET_SYNTHASE_2"/>
    <property type="match status" value="1"/>
</dbReference>
<name>METK_BRASO</name>